<dbReference type="EC" id="7.4.2.8" evidence="1"/>
<dbReference type="EMBL" id="AE017126">
    <property type="protein sequence ID" value="AAQ00845.1"/>
    <property type="molecule type" value="Genomic_DNA"/>
</dbReference>
<dbReference type="RefSeq" id="NP_876192.1">
    <property type="nucleotide sequence ID" value="NC_005042.1"/>
</dbReference>
<dbReference type="RefSeq" id="WP_011125950.1">
    <property type="nucleotide sequence ID" value="NC_005042.1"/>
</dbReference>
<dbReference type="SMR" id="Q7V9M9"/>
<dbReference type="STRING" id="167539.Pro_1801"/>
<dbReference type="EnsemblBacteria" id="AAQ00845">
    <property type="protein sequence ID" value="AAQ00845"/>
    <property type="gene ID" value="Pro_1801"/>
</dbReference>
<dbReference type="KEGG" id="pma:Pro_1801"/>
<dbReference type="PATRIC" id="fig|167539.5.peg.1903"/>
<dbReference type="eggNOG" id="COG0653">
    <property type="taxonomic scope" value="Bacteria"/>
</dbReference>
<dbReference type="HOGENOM" id="CLU_005314_3_0_3"/>
<dbReference type="OrthoDB" id="9805579at2"/>
<dbReference type="Proteomes" id="UP000001420">
    <property type="component" value="Chromosome"/>
</dbReference>
<dbReference type="GO" id="GO:0031522">
    <property type="term" value="C:cell envelope Sec protein transport complex"/>
    <property type="evidence" value="ECO:0007669"/>
    <property type="project" value="TreeGrafter"/>
</dbReference>
<dbReference type="GO" id="GO:0005829">
    <property type="term" value="C:cytosol"/>
    <property type="evidence" value="ECO:0007669"/>
    <property type="project" value="TreeGrafter"/>
</dbReference>
<dbReference type="GO" id="GO:0031676">
    <property type="term" value="C:plasma membrane-derived thylakoid membrane"/>
    <property type="evidence" value="ECO:0007669"/>
    <property type="project" value="UniProtKB-SubCell"/>
</dbReference>
<dbReference type="GO" id="GO:0005524">
    <property type="term" value="F:ATP binding"/>
    <property type="evidence" value="ECO:0007669"/>
    <property type="project" value="UniProtKB-UniRule"/>
</dbReference>
<dbReference type="GO" id="GO:0008564">
    <property type="term" value="F:protein-exporting ATPase activity"/>
    <property type="evidence" value="ECO:0007669"/>
    <property type="project" value="UniProtKB-EC"/>
</dbReference>
<dbReference type="GO" id="GO:0065002">
    <property type="term" value="P:intracellular protein transmembrane transport"/>
    <property type="evidence" value="ECO:0007669"/>
    <property type="project" value="UniProtKB-UniRule"/>
</dbReference>
<dbReference type="GO" id="GO:0017038">
    <property type="term" value="P:protein import"/>
    <property type="evidence" value="ECO:0007669"/>
    <property type="project" value="InterPro"/>
</dbReference>
<dbReference type="GO" id="GO:0006605">
    <property type="term" value="P:protein targeting"/>
    <property type="evidence" value="ECO:0007669"/>
    <property type="project" value="UniProtKB-UniRule"/>
</dbReference>
<dbReference type="GO" id="GO:0043952">
    <property type="term" value="P:protein transport by the Sec complex"/>
    <property type="evidence" value="ECO:0007669"/>
    <property type="project" value="TreeGrafter"/>
</dbReference>
<dbReference type="CDD" id="cd17928">
    <property type="entry name" value="DEXDc_SecA"/>
    <property type="match status" value="1"/>
</dbReference>
<dbReference type="CDD" id="cd18803">
    <property type="entry name" value="SF2_C_secA"/>
    <property type="match status" value="1"/>
</dbReference>
<dbReference type="FunFam" id="3.90.1440.10:FF:000003">
    <property type="entry name" value="Preprotein translocase SecA subunit"/>
    <property type="match status" value="1"/>
</dbReference>
<dbReference type="FunFam" id="3.40.50.300:FF:000429">
    <property type="entry name" value="Preprotein translocase subunit SecA"/>
    <property type="match status" value="1"/>
</dbReference>
<dbReference type="FunFam" id="1.10.3060.10:FF:000003">
    <property type="entry name" value="Protein translocase subunit SecA"/>
    <property type="match status" value="1"/>
</dbReference>
<dbReference type="FunFam" id="3.40.50.300:FF:000334">
    <property type="entry name" value="Protein translocase subunit SecA"/>
    <property type="match status" value="1"/>
</dbReference>
<dbReference type="Gene3D" id="1.10.3060.10">
    <property type="entry name" value="Helical scaffold and wing domains of SecA"/>
    <property type="match status" value="1"/>
</dbReference>
<dbReference type="Gene3D" id="3.40.50.300">
    <property type="entry name" value="P-loop containing nucleotide triphosphate hydrolases"/>
    <property type="match status" value="2"/>
</dbReference>
<dbReference type="Gene3D" id="3.90.1440.10">
    <property type="entry name" value="SecA, preprotein cross-linking domain"/>
    <property type="match status" value="1"/>
</dbReference>
<dbReference type="HAMAP" id="MF_01382">
    <property type="entry name" value="SecA"/>
    <property type="match status" value="1"/>
</dbReference>
<dbReference type="InterPro" id="IPR014001">
    <property type="entry name" value="Helicase_ATP-bd"/>
</dbReference>
<dbReference type="InterPro" id="IPR027417">
    <property type="entry name" value="P-loop_NTPase"/>
</dbReference>
<dbReference type="InterPro" id="IPR000185">
    <property type="entry name" value="SecA"/>
</dbReference>
<dbReference type="InterPro" id="IPR020937">
    <property type="entry name" value="SecA_CS"/>
</dbReference>
<dbReference type="InterPro" id="IPR011115">
    <property type="entry name" value="SecA_DEAD"/>
</dbReference>
<dbReference type="InterPro" id="IPR014018">
    <property type="entry name" value="SecA_motor_DEAD"/>
</dbReference>
<dbReference type="InterPro" id="IPR011130">
    <property type="entry name" value="SecA_preprotein_X-link_dom"/>
</dbReference>
<dbReference type="InterPro" id="IPR044722">
    <property type="entry name" value="SecA_SF2_C"/>
</dbReference>
<dbReference type="InterPro" id="IPR011116">
    <property type="entry name" value="SecA_Wing/Scaffold"/>
</dbReference>
<dbReference type="InterPro" id="IPR036266">
    <property type="entry name" value="SecA_Wing/Scaffold_sf"/>
</dbReference>
<dbReference type="InterPro" id="IPR036670">
    <property type="entry name" value="SecA_X-link_sf"/>
</dbReference>
<dbReference type="NCBIfam" id="TIGR00963">
    <property type="entry name" value="secA"/>
    <property type="match status" value="1"/>
</dbReference>
<dbReference type="PANTHER" id="PTHR30612:SF0">
    <property type="entry name" value="CHLOROPLAST PROTEIN-TRANSPORTING ATPASE"/>
    <property type="match status" value="1"/>
</dbReference>
<dbReference type="PANTHER" id="PTHR30612">
    <property type="entry name" value="SECA INNER MEMBRANE COMPONENT OF SEC PROTEIN SECRETION SYSTEM"/>
    <property type="match status" value="1"/>
</dbReference>
<dbReference type="Pfam" id="PF21090">
    <property type="entry name" value="P-loop_SecA"/>
    <property type="match status" value="1"/>
</dbReference>
<dbReference type="Pfam" id="PF07517">
    <property type="entry name" value="SecA_DEAD"/>
    <property type="match status" value="1"/>
</dbReference>
<dbReference type="Pfam" id="PF01043">
    <property type="entry name" value="SecA_PP_bind"/>
    <property type="match status" value="1"/>
</dbReference>
<dbReference type="Pfam" id="PF07516">
    <property type="entry name" value="SecA_SW"/>
    <property type="match status" value="1"/>
</dbReference>
<dbReference type="PRINTS" id="PR00906">
    <property type="entry name" value="SECA"/>
</dbReference>
<dbReference type="SMART" id="SM00957">
    <property type="entry name" value="SecA_DEAD"/>
    <property type="match status" value="1"/>
</dbReference>
<dbReference type="SMART" id="SM00958">
    <property type="entry name" value="SecA_PP_bind"/>
    <property type="match status" value="1"/>
</dbReference>
<dbReference type="SUPFAM" id="SSF81886">
    <property type="entry name" value="Helical scaffold and wing domains of SecA"/>
    <property type="match status" value="1"/>
</dbReference>
<dbReference type="SUPFAM" id="SSF52540">
    <property type="entry name" value="P-loop containing nucleoside triphosphate hydrolases"/>
    <property type="match status" value="2"/>
</dbReference>
<dbReference type="SUPFAM" id="SSF81767">
    <property type="entry name" value="Pre-protein crosslinking domain of SecA"/>
    <property type="match status" value="1"/>
</dbReference>
<dbReference type="PROSITE" id="PS01312">
    <property type="entry name" value="SECA"/>
    <property type="match status" value="1"/>
</dbReference>
<dbReference type="PROSITE" id="PS51196">
    <property type="entry name" value="SECA_MOTOR_DEAD"/>
    <property type="match status" value="1"/>
</dbReference>
<organism>
    <name type="scientific">Prochlorococcus marinus (strain SARG / CCMP1375 / SS120)</name>
    <dbReference type="NCBI Taxonomy" id="167539"/>
    <lineage>
        <taxon>Bacteria</taxon>
        <taxon>Bacillati</taxon>
        <taxon>Cyanobacteriota</taxon>
        <taxon>Cyanophyceae</taxon>
        <taxon>Synechococcales</taxon>
        <taxon>Prochlorococcaceae</taxon>
        <taxon>Prochlorococcus</taxon>
    </lineage>
</organism>
<proteinExistence type="inferred from homology"/>
<evidence type="ECO:0000255" key="1">
    <source>
        <dbReference type="HAMAP-Rule" id="MF_01382"/>
    </source>
</evidence>
<evidence type="ECO:0000256" key="2">
    <source>
        <dbReference type="SAM" id="MobiDB-lite"/>
    </source>
</evidence>
<protein>
    <recommendedName>
        <fullName evidence="1">Protein translocase subunit SecA</fullName>
        <ecNumber evidence="1">7.4.2.8</ecNumber>
    </recommendedName>
</protein>
<name>SECA_PROMA</name>
<keyword id="KW-0067">ATP-binding</keyword>
<keyword id="KW-0997">Cell inner membrane</keyword>
<keyword id="KW-1003">Cell membrane</keyword>
<keyword id="KW-0963">Cytoplasm</keyword>
<keyword id="KW-0472">Membrane</keyword>
<keyword id="KW-0547">Nucleotide-binding</keyword>
<keyword id="KW-0653">Protein transport</keyword>
<keyword id="KW-1185">Reference proteome</keyword>
<keyword id="KW-0793">Thylakoid</keyword>
<keyword id="KW-1278">Translocase</keyword>
<keyword id="KW-0811">Translocation</keyword>
<keyword id="KW-0813">Transport</keyword>
<accession>Q7V9M9</accession>
<sequence>MLKLLLGDPNARKLKRYQPILTDINLFEDEIASLNDDELRGKTSDFRTRLDKSSDSSIQECLDDLLPEAFAVVREASKRVLGMRHFDVQLIGGMVLHEGQIAEMKTGEGKTLVATLPSFLNALTGRGVHIVTVNDYLARRDAEWMGQVHRFLGLSVGLIQQDMTPIERRKNYECDITYATNSELGFDYLRDNMANDINEIVQRDFQFCIIDEVDSILIDEARTPLIISGQIERPQEKYQKAAEVVSTLQRAAEMGKDGIDPEGDYEVDEKQRTCTLTDEGFAKSEELLKVKDLFDPKDPWAHYITNALKAKELFVKDVNYIVRNEDAVIVDEFTGRVMPGRRWSDGQHQAIEAKEELPIQPETQTLASITYQNFFLLYPRLAGMTGTAKTEEVEFEKTYKLETTVIPTNRPRSRADWVDQVFKTESAKWRAVANETVEIHKKGRPVLVGTTSVEKSEVLSALLGEQDVPHNLLNAKPENVEREAEIIAQAGRAGAVTIATNMAGRGTDIILGGNSDYMARLKVREVLFPKLVKPEDSHKPPVPLQRRKDSSVGFGKEENNSKDKKVNHSNDVRAQENLYPCVLTDSTEQVLLDLEHQLIKEWGDRVLSPIELEDRISTAAEKAPTQDPLVQSLREAISLVKSEYDVVVKQEEVHVREAGGLHVIGTERHESRRVDNQLRGRAGRQGDLGSTRFFLSLGDNLLRIFGGDRVAALMNAFRVDEDMPIESGMLTRSLESAQKKVETYYFDIRKQVFEYDEVMNNQRRAVYSERHRVLEGDELKKQVIGYGERTMQEIVYAYVNPELPSEEWDLKQLVGKVKEFVYLLDDLKPKDIEALNIDELQAFLQEQLRNAYDLKESQIEESRPGLMREAERFFILQQIDTLWREHLQSMDALRESVGLRGYGQKDPLIEYKNEGYDMFLEMMTNMRRNVIYSMFMFQPAPPSDKE</sequence>
<gene>
    <name evidence="1" type="primary">secA</name>
    <name type="ordered locus">Pro_1801</name>
</gene>
<reference key="1">
    <citation type="journal article" date="2003" name="Proc. Natl. Acad. Sci. U.S.A.">
        <title>Genome sequence of the cyanobacterium Prochlorococcus marinus SS120, a nearly minimal oxyphototrophic genome.</title>
        <authorList>
            <person name="Dufresne A."/>
            <person name="Salanoubat M."/>
            <person name="Partensky F."/>
            <person name="Artiguenave F."/>
            <person name="Axmann I.M."/>
            <person name="Barbe V."/>
            <person name="Duprat S."/>
            <person name="Galperin M.Y."/>
            <person name="Koonin E.V."/>
            <person name="Le Gall F."/>
            <person name="Makarova K.S."/>
            <person name="Ostrowski M."/>
            <person name="Oztas S."/>
            <person name="Robert C."/>
            <person name="Rogozin I.B."/>
            <person name="Scanlan D.J."/>
            <person name="Tandeau de Marsac N."/>
            <person name="Weissenbach J."/>
            <person name="Wincker P."/>
            <person name="Wolf Y.I."/>
            <person name="Hess W.R."/>
        </authorList>
    </citation>
    <scope>NUCLEOTIDE SEQUENCE [LARGE SCALE GENOMIC DNA]</scope>
    <source>
        <strain>SARG / CCMP1375 / SS120</strain>
    </source>
</reference>
<feature type="chain" id="PRO_0000318403" description="Protein translocase subunit SecA">
    <location>
        <begin position="1"/>
        <end position="946"/>
    </location>
</feature>
<feature type="region of interest" description="Disordered" evidence="2">
    <location>
        <begin position="534"/>
        <end position="569"/>
    </location>
</feature>
<feature type="compositionally biased region" description="Basic and acidic residues" evidence="2">
    <location>
        <begin position="546"/>
        <end position="569"/>
    </location>
</feature>
<feature type="binding site" evidence="1">
    <location>
        <position position="89"/>
    </location>
    <ligand>
        <name>ATP</name>
        <dbReference type="ChEBI" id="CHEBI:30616"/>
    </ligand>
</feature>
<feature type="binding site" evidence="1">
    <location>
        <begin position="107"/>
        <end position="111"/>
    </location>
    <ligand>
        <name>ATP</name>
        <dbReference type="ChEBI" id="CHEBI:30616"/>
    </ligand>
</feature>
<feature type="binding site" evidence="1">
    <location>
        <position position="508"/>
    </location>
    <ligand>
        <name>ATP</name>
        <dbReference type="ChEBI" id="CHEBI:30616"/>
    </ligand>
</feature>
<comment type="function">
    <text evidence="1">Part of the Sec protein translocase complex. Interacts with the SecYEG preprotein conducting channel. Has a central role in coupling the hydrolysis of ATP to the transfer of proteins into and across the cell membrane, serving as an ATP-driven molecular motor driving the stepwise translocation of polypeptide chains across the membrane.</text>
</comment>
<comment type="function">
    <text evidence="1">Probably participates in protein translocation into and across both the cytoplasmic and thylakoid membranes in cyanobacterial cells.</text>
</comment>
<comment type="catalytic activity">
    <reaction evidence="1">
        <text>ATP + H2O + cellular proteinSide 1 = ADP + phosphate + cellular proteinSide 2.</text>
        <dbReference type="EC" id="7.4.2.8"/>
    </reaction>
</comment>
<comment type="subunit">
    <text evidence="1">Monomer and homodimer. Part of the essential Sec protein translocation apparatus which comprises SecA, SecYEG and auxiliary proteins SecDF. Other proteins may also be involved.</text>
</comment>
<comment type="subcellular location">
    <subcellularLocation>
        <location evidence="1">Cell inner membrane</location>
        <topology evidence="1">Peripheral membrane protein</topology>
        <orientation evidence="1">Cytoplasmic side</orientation>
    </subcellularLocation>
    <subcellularLocation>
        <location evidence="1">Cellular thylakoid membrane</location>
        <topology evidence="1">Peripheral membrane protein</topology>
        <orientation evidence="1">Cytoplasmic side</orientation>
    </subcellularLocation>
    <subcellularLocation>
        <location evidence="1">Cytoplasm</location>
    </subcellularLocation>
</comment>
<comment type="similarity">
    <text evidence="1">Belongs to the SecA family.</text>
</comment>